<keyword id="KW-0002">3D-structure</keyword>
<keyword id="KW-0025">Alternative splicing</keyword>
<keyword id="KW-0127">Catecholamine biosynthesis</keyword>
<keyword id="KW-0210">Decarboxylase</keyword>
<keyword id="KW-0456">Lyase</keyword>
<keyword id="KW-0663">Pyridoxal phosphate</keyword>
<keyword id="KW-1185">Reference proteome</keyword>
<sequence length="510" mass="57288">MSHIPISNTIPTKQTDGNGKANISPDKLDPKVSIDMEAPEFKDFAKTMVDFIAEYLENIRERRVLPEVKPGYLKPLIPDAAPEKPEKWQDVMQDIERVIMPGVTHWHSPKFHAYFPTANSYPAIVADMLSGAIACIGFTWIASPACTELEVVMMDWLGKMLELPAEFLACSGGKGGGVIQGTASESTLVALLGAKAKKLKEVKELHPEWDEHTILGKLVGYCSDQAHSSVERAGLLGGVKLRSVQSENHRMRGAALEKAIEQDVAEGLIPFYAVVTLGTTNSCAFDYLDECGPVGNKHNLWIHVDAAYAGSAFICPEYRHLMKGIESADSFNFNPHKWMLVNFDCSAMWLKDPSWVVNAFNVDPLYLKHDMQGSAPDYRHWQIPLGRRFRALKLWFVLRLYGVENLQAHIRRHCNFAKQFGDLCVADSRFELAAEINMGLVCFRLKGSNERNEALLKRINGRGHIHLVPAKIKDVYFLRMAICSRFTQSEDMEYSWKEVSAAADEMEQEQ</sequence>
<accession>P05031</accession>
<accession>O18379</accession>
<accession>P05032</accession>
<accession>Q24295</accession>
<accession>Q7YSJ0</accession>
<accession>Q7YSK5</accession>
<accession>Q7YSV6</accession>
<accession>Q7Z0E1</accession>
<accession>Q7Z0E2</accession>
<accession>Q7Z0E3</accession>
<accession>Q7Z0E4</accession>
<accession>Q7Z0E5</accession>
<accession>Q7Z0E6</accession>
<accession>Q7Z0E7</accession>
<accession>Q7Z0E8</accession>
<accession>Q7Z0E9</accession>
<accession>Q95SL9</accession>
<accession>Q9VIZ5</accession>
<accession>Q9VIZ6</accession>
<organism>
    <name type="scientific">Drosophila melanogaster</name>
    <name type="common">Fruit fly</name>
    <dbReference type="NCBI Taxonomy" id="7227"/>
    <lineage>
        <taxon>Eukaryota</taxon>
        <taxon>Metazoa</taxon>
        <taxon>Ecdysozoa</taxon>
        <taxon>Arthropoda</taxon>
        <taxon>Hexapoda</taxon>
        <taxon>Insecta</taxon>
        <taxon>Pterygota</taxon>
        <taxon>Neoptera</taxon>
        <taxon>Endopterygota</taxon>
        <taxon>Diptera</taxon>
        <taxon>Brachycera</taxon>
        <taxon>Muscomorpha</taxon>
        <taxon>Ephydroidea</taxon>
        <taxon>Drosophilidae</taxon>
        <taxon>Drosophila</taxon>
        <taxon>Sophophora</taxon>
    </lineage>
</organism>
<reference key="1">
    <citation type="journal article" date="1986" name="EMBO J.">
        <title>Regulated splicing produces different forms of dopa decarboxylase in the central nervous system and hypoderm of Drosophila melanogaster.</title>
        <authorList>
            <person name="Morgan B.A."/>
            <person name="Johnson W.A."/>
            <person name="Hirsh J."/>
        </authorList>
    </citation>
    <scope>NUCLEOTIDE SEQUENCE [GENOMIC DNA] (ISOFORMS CNS AND HYPODERM)</scope>
    <scope>TISSUE SPECIFICITY</scope>
    <source>
        <strain>Canton-S</strain>
    </source>
</reference>
<reference key="2">
    <citation type="journal article" date="1986" name="EMBO J.">
        <title>Sequence and structure of the dopa decarboxylase gene of Drosophila: evidence for novel RNA splicing variants.</title>
        <authorList>
            <person name="Eveleth D.D."/>
            <person name="Gietz R.D."/>
            <person name="Spencer C.A."/>
            <person name="Nargang F.E."/>
            <person name="Hodgetts R.B."/>
            <person name="Marsh J.L."/>
        </authorList>
    </citation>
    <scope>NUCLEOTIDE SEQUENCE [GENOMIC DNA] (ISOFORMS CNS AND 3)</scope>
    <source>
        <strain>Canton-S</strain>
    </source>
</reference>
<reference key="3">
    <citation type="submission" date="1997-11" db="EMBL/GenBank/DDBJ databases">
        <authorList>
            <person name="Marsh J.L."/>
        </authorList>
    </citation>
    <scope>SEQUENCE REVISION</scope>
</reference>
<reference key="4">
    <citation type="journal article" date="2003" name="Nat. Genet.">
        <title>Dopa decarboxylase (Ddc) affects variation in Drosophila longevity.</title>
        <authorList>
            <person name="De Luca M."/>
            <person name="Roshina N.V."/>
            <person name="Geiger-Thornsberry G.L."/>
            <person name="Lyman R.F."/>
            <person name="Pasyukova E.G."/>
            <person name="Mackay T.F.C."/>
        </authorList>
    </citation>
    <scope>NUCLEOTIDE SEQUENCE [GENOMIC DNA] (ISOFORMS CNS; HYPODERM AND 3)</scope>
    <scope>FUNCTION</scope>
    <scope>VARIANTS PRO-12; ASN-197; MET-264; MET-390; PHE-428 AND ALA-489</scope>
    <source>
        <strain>Allele Ddc-2b</strain>
        <strain>Allele Ddc-Ore</strain>
        <strain>Allele Ddc-R11</strain>
        <strain>Allele Ddc-R12</strain>
        <strain>Allele Ddc-R16</strain>
        <strain>Allele Ddc-R18</strain>
        <strain>Allele Ddc-R20</strain>
        <strain>Allele Ddc-R24</strain>
        <strain>Allele Ddc-R25</strain>
        <strain>Allele Ddc-R27</strain>
        <strain>Allele Ddc-R30</strain>
        <strain>Allele Ddc-R33</strain>
        <strain>Allele Ddc-R6</strain>
        <strain>Allele Ddc-R9</strain>
        <tissue>Brain</tissue>
        <tissue>Epidermis</tissue>
    </source>
</reference>
<reference key="5">
    <citation type="journal article" date="2000" name="Science">
        <title>The genome sequence of Drosophila melanogaster.</title>
        <authorList>
            <person name="Adams M.D."/>
            <person name="Celniker S.E."/>
            <person name="Holt R.A."/>
            <person name="Evans C.A."/>
            <person name="Gocayne J.D."/>
            <person name="Amanatides P.G."/>
            <person name="Scherer S.E."/>
            <person name="Li P.W."/>
            <person name="Hoskins R.A."/>
            <person name="Galle R.F."/>
            <person name="George R.A."/>
            <person name="Lewis S.E."/>
            <person name="Richards S."/>
            <person name="Ashburner M."/>
            <person name="Henderson S.N."/>
            <person name="Sutton G.G."/>
            <person name="Wortman J.R."/>
            <person name="Yandell M.D."/>
            <person name="Zhang Q."/>
            <person name="Chen L.X."/>
            <person name="Brandon R.C."/>
            <person name="Rogers Y.-H.C."/>
            <person name="Blazej R.G."/>
            <person name="Champe M."/>
            <person name="Pfeiffer B.D."/>
            <person name="Wan K.H."/>
            <person name="Doyle C."/>
            <person name="Baxter E.G."/>
            <person name="Helt G."/>
            <person name="Nelson C.R."/>
            <person name="Miklos G.L.G."/>
            <person name="Abril J.F."/>
            <person name="Agbayani A."/>
            <person name="An H.-J."/>
            <person name="Andrews-Pfannkoch C."/>
            <person name="Baldwin D."/>
            <person name="Ballew R.M."/>
            <person name="Basu A."/>
            <person name="Baxendale J."/>
            <person name="Bayraktaroglu L."/>
            <person name="Beasley E.M."/>
            <person name="Beeson K.Y."/>
            <person name="Benos P.V."/>
            <person name="Berman B.P."/>
            <person name="Bhandari D."/>
            <person name="Bolshakov S."/>
            <person name="Borkova D."/>
            <person name="Botchan M.R."/>
            <person name="Bouck J."/>
            <person name="Brokstein P."/>
            <person name="Brottier P."/>
            <person name="Burtis K.C."/>
            <person name="Busam D.A."/>
            <person name="Butler H."/>
            <person name="Cadieu E."/>
            <person name="Center A."/>
            <person name="Chandra I."/>
            <person name="Cherry J.M."/>
            <person name="Cawley S."/>
            <person name="Dahlke C."/>
            <person name="Davenport L.B."/>
            <person name="Davies P."/>
            <person name="de Pablos B."/>
            <person name="Delcher A."/>
            <person name="Deng Z."/>
            <person name="Mays A.D."/>
            <person name="Dew I."/>
            <person name="Dietz S.M."/>
            <person name="Dodson K."/>
            <person name="Doup L.E."/>
            <person name="Downes M."/>
            <person name="Dugan-Rocha S."/>
            <person name="Dunkov B.C."/>
            <person name="Dunn P."/>
            <person name="Durbin K.J."/>
            <person name="Evangelista C.C."/>
            <person name="Ferraz C."/>
            <person name="Ferriera S."/>
            <person name="Fleischmann W."/>
            <person name="Fosler C."/>
            <person name="Gabrielian A.E."/>
            <person name="Garg N.S."/>
            <person name="Gelbart W.M."/>
            <person name="Glasser K."/>
            <person name="Glodek A."/>
            <person name="Gong F."/>
            <person name="Gorrell J.H."/>
            <person name="Gu Z."/>
            <person name="Guan P."/>
            <person name="Harris M."/>
            <person name="Harris N.L."/>
            <person name="Harvey D.A."/>
            <person name="Heiman T.J."/>
            <person name="Hernandez J.R."/>
            <person name="Houck J."/>
            <person name="Hostin D."/>
            <person name="Houston K.A."/>
            <person name="Howland T.J."/>
            <person name="Wei M.-H."/>
            <person name="Ibegwam C."/>
            <person name="Jalali M."/>
            <person name="Kalush F."/>
            <person name="Karpen G.H."/>
            <person name="Ke Z."/>
            <person name="Kennison J.A."/>
            <person name="Ketchum K.A."/>
            <person name="Kimmel B.E."/>
            <person name="Kodira C.D."/>
            <person name="Kraft C.L."/>
            <person name="Kravitz S."/>
            <person name="Kulp D."/>
            <person name="Lai Z."/>
            <person name="Lasko P."/>
            <person name="Lei Y."/>
            <person name="Levitsky A.A."/>
            <person name="Li J.H."/>
            <person name="Li Z."/>
            <person name="Liang Y."/>
            <person name="Lin X."/>
            <person name="Liu X."/>
            <person name="Mattei B."/>
            <person name="McIntosh T.C."/>
            <person name="McLeod M.P."/>
            <person name="McPherson D."/>
            <person name="Merkulov G."/>
            <person name="Milshina N.V."/>
            <person name="Mobarry C."/>
            <person name="Morris J."/>
            <person name="Moshrefi A."/>
            <person name="Mount S.M."/>
            <person name="Moy M."/>
            <person name="Murphy B."/>
            <person name="Murphy L."/>
            <person name="Muzny D.M."/>
            <person name="Nelson D.L."/>
            <person name="Nelson D.R."/>
            <person name="Nelson K.A."/>
            <person name="Nixon K."/>
            <person name="Nusskern D.R."/>
            <person name="Pacleb J.M."/>
            <person name="Palazzolo M."/>
            <person name="Pittman G.S."/>
            <person name="Pan S."/>
            <person name="Pollard J."/>
            <person name="Puri V."/>
            <person name="Reese M.G."/>
            <person name="Reinert K."/>
            <person name="Remington K."/>
            <person name="Saunders R.D.C."/>
            <person name="Scheeler F."/>
            <person name="Shen H."/>
            <person name="Shue B.C."/>
            <person name="Siden-Kiamos I."/>
            <person name="Simpson M."/>
            <person name="Skupski M.P."/>
            <person name="Smith T.J."/>
            <person name="Spier E."/>
            <person name="Spradling A.C."/>
            <person name="Stapleton M."/>
            <person name="Strong R."/>
            <person name="Sun E."/>
            <person name="Svirskas R."/>
            <person name="Tector C."/>
            <person name="Turner R."/>
            <person name="Venter E."/>
            <person name="Wang A.H."/>
            <person name="Wang X."/>
            <person name="Wang Z.-Y."/>
            <person name="Wassarman D.A."/>
            <person name="Weinstock G.M."/>
            <person name="Weissenbach J."/>
            <person name="Williams S.M."/>
            <person name="Woodage T."/>
            <person name="Worley K.C."/>
            <person name="Wu D."/>
            <person name="Yang S."/>
            <person name="Yao Q.A."/>
            <person name="Ye J."/>
            <person name="Yeh R.-F."/>
            <person name="Zaveri J.S."/>
            <person name="Zhan M."/>
            <person name="Zhang G."/>
            <person name="Zhao Q."/>
            <person name="Zheng L."/>
            <person name="Zheng X.H."/>
            <person name="Zhong F.N."/>
            <person name="Zhong W."/>
            <person name="Zhou X."/>
            <person name="Zhu S.C."/>
            <person name="Zhu X."/>
            <person name="Smith H.O."/>
            <person name="Gibbs R.A."/>
            <person name="Myers E.W."/>
            <person name="Rubin G.M."/>
            <person name="Venter J.C."/>
        </authorList>
    </citation>
    <scope>NUCLEOTIDE SEQUENCE [LARGE SCALE GENOMIC DNA]</scope>
    <source>
        <strain>Berkeley</strain>
    </source>
</reference>
<reference key="6">
    <citation type="journal article" date="2002" name="Genome Biol.">
        <title>Annotation of the Drosophila melanogaster euchromatic genome: a systematic review.</title>
        <authorList>
            <person name="Misra S."/>
            <person name="Crosby M.A."/>
            <person name="Mungall C.J."/>
            <person name="Matthews B.B."/>
            <person name="Campbell K.S."/>
            <person name="Hradecky P."/>
            <person name="Huang Y."/>
            <person name="Kaminker J.S."/>
            <person name="Millburn G.H."/>
            <person name="Prochnik S.E."/>
            <person name="Smith C.D."/>
            <person name="Tupy J.L."/>
            <person name="Whitfield E.J."/>
            <person name="Bayraktaroglu L."/>
            <person name="Berman B.P."/>
            <person name="Bettencourt B.R."/>
            <person name="Celniker S.E."/>
            <person name="de Grey A.D.N.J."/>
            <person name="Drysdale R.A."/>
            <person name="Harris N.L."/>
            <person name="Richter J."/>
            <person name="Russo S."/>
            <person name="Schroeder A.J."/>
            <person name="Shu S.Q."/>
            <person name="Stapleton M."/>
            <person name="Yamada C."/>
            <person name="Ashburner M."/>
            <person name="Gelbart W.M."/>
            <person name="Rubin G.M."/>
            <person name="Lewis S.E."/>
        </authorList>
    </citation>
    <scope>GENOME REANNOTATION</scope>
    <scope>ALTERNATIVE SPLICING</scope>
    <source>
        <strain>Berkeley</strain>
    </source>
</reference>
<reference key="7">
    <citation type="journal article" date="2002" name="Genome Biol.">
        <title>A Drosophila full-length cDNA resource.</title>
        <authorList>
            <person name="Stapleton M."/>
            <person name="Carlson J.W."/>
            <person name="Brokstein P."/>
            <person name="Yu C."/>
            <person name="Champe M."/>
            <person name="George R.A."/>
            <person name="Guarin H."/>
            <person name="Kronmiller B."/>
            <person name="Pacleb J.M."/>
            <person name="Park S."/>
            <person name="Wan K.H."/>
            <person name="Rubin G.M."/>
            <person name="Celniker S.E."/>
        </authorList>
    </citation>
    <scope>NUCLEOTIDE SEQUENCE [LARGE SCALE MRNA] (ISOFORM 3)</scope>
    <source>
        <strain>Berkeley</strain>
        <tissue>Head</tissue>
    </source>
</reference>
<reference key="8">
    <citation type="journal article" date="1999" name="Gene">
        <title>A compact gene cluster in Drosophila: the unrelated Cs gene is compressed between duplicated amd and Ddc.</title>
        <authorList>
            <person name="Tatarenkov A."/>
            <person name="Saez A.G."/>
            <person name="Ayala F.J."/>
        </authorList>
    </citation>
    <scope>NUCLEOTIDE SEQUENCE [GENOMIC DNA] OF 74-510</scope>
    <source>
        <strain>St. Lucia</strain>
    </source>
</reference>
<reference key="9">
    <citation type="journal article" date="1987" name="Mol. Gen. Genet.">
        <title>Overlapping transcription units in Drosophila: sequence and structure of the Cs gene.</title>
        <authorList>
            <person name="Eveleth D.D."/>
            <person name="Marsh J.L."/>
        </authorList>
    </citation>
    <scope>NUCLEOTIDE SEQUENCE [GENOMIC DNA] OF 493-510</scope>
</reference>
<reference key="10">
    <citation type="journal article" date="1986" name="Science">
        <title>CNS and hypoderm regulatory elements of the Drosophila melanogaster dopa decarboxylase gene.</title>
        <authorList>
            <person name="Scholnick S.B."/>
            <person name="Bray S.J."/>
            <person name="Morgan B.A."/>
            <person name="McCormick C.A."/>
            <person name="Hirsh J."/>
        </authorList>
    </citation>
    <scope>TISSUE SPECIFICITY</scope>
    <scope>DEVELOPMENTAL STAGE</scope>
</reference>
<reference key="11">
    <citation type="journal article" date="1986" name="Dev. Biol.">
        <title>Analysis of the transcription unit adjacent to the 3'-end of the dopa decarboxylase gene in Drosophila melanogaster.</title>
        <authorList>
            <person name="Spencer C.A."/>
            <person name="Gietz R.D."/>
            <person name="Hodgetts R.B."/>
        </authorList>
    </citation>
    <scope>DEVELOPMENTAL STAGE</scope>
</reference>
<reference key="12">
    <citation type="journal article" date="1986" name="Dev. Biol.">
        <title>Differential responses of the dopa decarboxylase gene to 20-OH-ecdysone in Drosophila melanogaster.</title>
        <authorList>
            <person name="Clark W.C."/>
            <person name="Doctor J."/>
            <person name="Fristrom J.W."/>
            <person name="Hodgetts R.B."/>
        </authorList>
    </citation>
    <scope>INDUCTION</scope>
</reference>
<reference key="13">
    <citation type="journal article" date="2017" name="Insect Biochem. Mol. Biol.">
        <title>Biochemical identification of residues that discriminate between 3,4-dihydroxyphenylalanine decarboxylase and 3,4-dihydroxyphenylacetaldehyde synthase-mediated reactions.</title>
        <authorList>
            <person name="Liang J."/>
            <person name="Han Q."/>
            <person name="Ding H."/>
            <person name="Li J."/>
        </authorList>
    </citation>
    <scope>CATALYTIC ACTIVITY (ISOFORM HYPODERM)</scope>
    <scope>MUTAGENESIS OF HIS-227 (ISOFORM HYPODERM)</scope>
    <scope>BIOPHYSICOCHEMICAL PROPERTIES (ISOFORM HYPODERM)</scope>
    <scope>SUBUNIT (ISOFORM HYPODERM)</scope>
</reference>
<reference key="14">
    <citation type="journal article" date="2022" name="EMBO J.">
        <title>Myc suppresses male-male courtship in Drosophila.</title>
        <authorList>
            <person name="Pan Y."/>
            <person name="Li W."/>
            <person name="Deng Z."/>
            <person name="Sun Y."/>
            <person name="Ma X."/>
            <person name="Liang R."/>
            <person name="Guo X."/>
            <person name="Sun Y."/>
            <person name="Li W."/>
            <person name="Jiao R."/>
            <person name="Xue L."/>
        </authorList>
    </citation>
    <scope>TISSUE SPECIFICITY</scope>
    <scope>DISRUPTION PHENOTYPE</scope>
</reference>
<reference evidence="15" key="15">
    <citation type="journal article" date="2010" name="PLoS ONE">
        <title>Crystal structure and substrate specificity of Drosophila 3,4-dihydroxyphenylalanine decarboxylase.</title>
        <authorList>
            <person name="Han Q."/>
            <person name="Ding H."/>
            <person name="Robinson H."/>
            <person name="Christensen B.M."/>
            <person name="Li J."/>
        </authorList>
    </citation>
    <scope>X-RAY CRYSTALLOGRAPHY (1.75 ANGSTROMS) OF 36-510 (ISOFORM HYPODERM)</scope>
    <scope>MUTAGENESIS OF THR-117 AND HIS-227 (ISOFORM HYPODERM)</scope>
    <scope>CATALYTIC ACTIVITY (ISOFORM HYPODERM)</scope>
    <scope>FUNCTION (ISOFORM HYPODERM)</scope>
    <scope>BIOPHYSICOCHEMICAL PROPERTIES (ISOFORM HYPODERM)</scope>
</reference>
<protein>
    <recommendedName>
        <fullName>Aromatic-L-amino-acid decarboxylase</fullName>
        <shortName>AADC</shortName>
        <ecNumber evidence="5">4.1.1.28</ecNumber>
    </recommendedName>
    <alternativeName>
        <fullName evidence="12">DOPA decarboxylase</fullName>
        <shortName>DDC</shortName>
    </alternativeName>
</protein>
<evidence type="ECO:0000250" key="1"/>
<evidence type="ECO:0000256" key="2">
    <source>
        <dbReference type="SAM" id="MobiDB-lite"/>
    </source>
</evidence>
<evidence type="ECO:0000269" key="3">
    <source>
    </source>
</evidence>
<evidence type="ECO:0000269" key="4">
    <source>
    </source>
</evidence>
<evidence type="ECO:0000269" key="5">
    <source>
    </source>
</evidence>
<evidence type="ECO:0000269" key="6">
    <source>
    </source>
</evidence>
<evidence type="ECO:0000269" key="7">
    <source>
    </source>
</evidence>
<evidence type="ECO:0000269" key="8">
    <source>
    </source>
</evidence>
<evidence type="ECO:0000269" key="9">
    <source>
    </source>
</evidence>
<evidence type="ECO:0000269" key="10">
    <source>
    </source>
</evidence>
<evidence type="ECO:0000303" key="11">
    <source>
    </source>
</evidence>
<evidence type="ECO:0000303" key="12">
    <source>
    </source>
</evidence>
<evidence type="ECO:0000305" key="13"/>
<evidence type="ECO:0000305" key="14">
    <source>
    </source>
</evidence>
<evidence type="ECO:0007744" key="15">
    <source>
        <dbReference type="PDB" id="3K40"/>
    </source>
</evidence>
<evidence type="ECO:0007829" key="16">
    <source>
        <dbReference type="PDB" id="3K40"/>
    </source>
</evidence>
<feature type="chain" id="PRO_0000146945" description="Aromatic-L-amino-acid decarboxylase">
    <location>
        <begin position="1"/>
        <end position="510"/>
    </location>
</feature>
<feature type="region of interest" description="Disordered" evidence="2">
    <location>
        <begin position="1"/>
        <end position="28"/>
    </location>
</feature>
<feature type="region of interest" description="Disordered" evidence="4">
    <location>
        <begin position="358"/>
        <end position="384"/>
    </location>
</feature>
<feature type="compositionally biased region" description="Polar residues" evidence="2">
    <location>
        <begin position="1"/>
        <end position="17"/>
    </location>
</feature>
<feature type="active site" evidence="4 14">
    <location>
        <position position="227"/>
    </location>
</feature>
<feature type="binding site" evidence="4">
    <location>
        <position position="117"/>
    </location>
    <ligand>
        <name>substrate</name>
    </ligand>
</feature>
<feature type="binding site" evidence="4">
    <location>
        <position position="183"/>
    </location>
    <ligand>
        <name>pyridoxal 5'-phosphate</name>
        <dbReference type="ChEBI" id="CHEBI:597326"/>
    </ligand>
</feature>
<feature type="binding site" evidence="4">
    <location>
        <position position="184"/>
    </location>
    <ligand>
        <name>pyridoxal 5'-phosphate</name>
        <dbReference type="ChEBI" id="CHEBI:597326"/>
    </ligand>
</feature>
<feature type="binding site" evidence="4">
    <location>
        <position position="227"/>
    </location>
    <ligand>
        <name>pyridoxal 5'-phosphate</name>
        <dbReference type="ChEBI" id="CHEBI:597326"/>
    </ligand>
</feature>
<feature type="binding site" evidence="4">
    <location>
        <position position="227"/>
    </location>
    <ligand>
        <name>substrate</name>
    </ligand>
</feature>
<feature type="binding site" evidence="4">
    <location>
        <position position="305"/>
    </location>
    <ligand>
        <name>pyridoxal 5'-phosphate</name>
        <dbReference type="ChEBI" id="CHEBI:597326"/>
    </ligand>
</feature>
<feature type="binding site" evidence="4">
    <location>
        <position position="334"/>
    </location>
    <ligand>
        <name>pyridoxal 5'-phosphate</name>
        <dbReference type="ChEBI" id="CHEBI:597326"/>
    </ligand>
</feature>
<feature type="modified residue" description="N6-(pyridoxal phosphate)lysine" evidence="1">
    <location>
        <position position="337"/>
    </location>
</feature>
<feature type="splice variant" id="VSP_001305" description="In isoform Hypoderm." evidence="13">
    <location>
        <begin position="1"/>
        <end position="35"/>
    </location>
</feature>
<feature type="splice variant" id="VSP_001306" description="In isoform 3." evidence="11">
    <original>MSHIPISNTIPTKQTDGNGKANISPDKLDPKVS</original>
    <variation>MSIGFRYRANNYARLITKYFCIHIK</variation>
    <location>
        <begin position="1"/>
        <end position="33"/>
    </location>
</feature>
<feature type="sequence variant" description="In allele Ddc-R6, allele Ddc-R9, allele Ddc-R16, allele Ddc-R20, allele Ddc-R25 and allele Ddc-R30." evidence="3">
    <original>T</original>
    <variation>P</variation>
    <location>
        <position position="12"/>
    </location>
</feature>
<feature type="sequence variant" description="In allele Ddc-R9." evidence="3">
    <original>K</original>
    <variation>N</variation>
    <location>
        <position position="197"/>
    </location>
</feature>
<feature type="sequence variant" description="In allele Ddc-R11 and allele Ddc-R18." evidence="3">
    <original>V</original>
    <variation>M</variation>
    <location>
        <position position="264"/>
    </location>
</feature>
<feature type="sequence variant" description="In allele Ddc-Ore." evidence="3">
    <original>R</original>
    <variation>M</variation>
    <location>
        <position position="390"/>
    </location>
</feature>
<feature type="sequence variant" description="In allele Ddc-R33." evidence="3">
    <original>S</original>
    <variation>F</variation>
    <location>
        <position position="428"/>
    </location>
</feature>
<feature type="sequence variant" description="In allele Ddc-2b." evidence="3">
    <original>S</original>
    <variation>A</variation>
    <location>
        <position position="489"/>
    </location>
</feature>
<feature type="mutagenesis site" description="Decreased specific activity to L-DOPA. Increased specific activity to 5-HTP. Decreased ligand binding affinity." evidence="4">
    <original>T</original>
    <variation>A</variation>
    <location>
        <position position="117"/>
    </location>
</feature>
<feature type="mutagenesis site" description="Increased specific activity to L-DOPA and 5-HTP. Decreased ligand binding affinity." evidence="4">
    <original>T</original>
    <variation>S</variation>
    <location>
        <position position="117"/>
    </location>
</feature>
<feature type="mutagenesis site" description="Enzymatic shift from L-dopa decarboxylation of to L-Dopa decarboxylation-oxidative deamination." evidence="5">
    <original>H</original>
    <variation>N</variation>
    <location>
        <position position="227"/>
    </location>
</feature>
<feature type="mutagenesis site" description="Decreased specific activity to L-DOPA and 5-HTP. Decreased ligand binding affinity." evidence="4">
    <original>H</original>
    <variation>W</variation>
    <location>
        <position position="227"/>
    </location>
</feature>
<feature type="sequence conflict" description="In Ref. 1; CAB37087." evidence="13" ref="1">
    <location>
        <begin position="32"/>
        <end position="33"/>
    </location>
</feature>
<feature type="sequence conflict" description="In Ref. 1; CAB37087/CAB37088." evidence="13" ref="1">
    <original>R</original>
    <variation>A</variation>
    <location>
        <position position="479"/>
    </location>
</feature>
<feature type="helix" evidence="16">
    <location>
        <begin position="38"/>
        <end position="57"/>
    </location>
</feature>
<feature type="helix" evidence="16">
    <location>
        <begin position="59"/>
        <end position="61"/>
    </location>
</feature>
<feature type="helix" evidence="16">
    <location>
        <begin position="74"/>
        <end position="76"/>
    </location>
</feature>
<feature type="helix" evidence="16">
    <location>
        <begin position="88"/>
        <end position="98"/>
    </location>
</feature>
<feature type="helix" evidence="16">
    <location>
        <begin position="100"/>
        <end position="102"/>
    </location>
</feature>
<feature type="helix" evidence="16">
    <location>
        <begin position="121"/>
        <end position="133"/>
    </location>
</feature>
<feature type="strand" evidence="16">
    <location>
        <begin position="137"/>
        <end position="139"/>
    </location>
</feature>
<feature type="helix" evidence="16">
    <location>
        <begin position="144"/>
        <end position="160"/>
    </location>
</feature>
<feature type="helix" evidence="16">
    <location>
        <begin position="165"/>
        <end position="167"/>
    </location>
</feature>
<feature type="helix" evidence="16">
    <location>
        <begin position="169"/>
        <end position="171"/>
    </location>
</feature>
<feature type="strand" evidence="16">
    <location>
        <begin position="176"/>
        <end position="181"/>
    </location>
</feature>
<feature type="helix" evidence="16">
    <location>
        <begin position="183"/>
        <end position="205"/>
    </location>
</feature>
<feature type="helix" evidence="16">
    <location>
        <begin position="211"/>
        <end position="217"/>
    </location>
</feature>
<feature type="strand" evidence="16">
    <location>
        <begin position="218"/>
        <end position="223"/>
    </location>
</feature>
<feature type="helix" evidence="16">
    <location>
        <begin position="228"/>
        <end position="237"/>
    </location>
</feature>
<feature type="strand" evidence="16">
    <location>
        <begin position="240"/>
        <end position="244"/>
    </location>
</feature>
<feature type="helix" evidence="16">
    <location>
        <begin position="253"/>
        <end position="265"/>
    </location>
</feature>
<feature type="strand" evidence="16">
    <location>
        <begin position="269"/>
        <end position="278"/>
    </location>
</feature>
<feature type="turn" evidence="16">
    <location>
        <begin position="280"/>
        <end position="282"/>
    </location>
</feature>
<feature type="helix" evidence="16">
    <location>
        <begin position="288"/>
        <end position="297"/>
    </location>
</feature>
<feature type="strand" evidence="16">
    <location>
        <begin position="301"/>
        <end position="305"/>
    </location>
</feature>
<feature type="helix" evidence="16">
    <location>
        <begin position="309"/>
        <end position="314"/>
    </location>
</feature>
<feature type="helix" evidence="16">
    <location>
        <begin position="316"/>
        <end position="322"/>
    </location>
</feature>
<feature type="helix" evidence="16">
    <location>
        <begin position="325"/>
        <end position="327"/>
    </location>
</feature>
<feature type="strand" evidence="16">
    <location>
        <begin position="329"/>
        <end position="333"/>
    </location>
</feature>
<feature type="strand" evidence="16">
    <location>
        <begin position="346"/>
        <end position="352"/>
    </location>
</feature>
<feature type="helix" evidence="16">
    <location>
        <begin position="353"/>
        <end position="355"/>
    </location>
</feature>
<feature type="helix" evidence="16">
    <location>
        <begin position="387"/>
        <end position="389"/>
    </location>
</feature>
<feature type="helix" evidence="16">
    <location>
        <begin position="391"/>
        <end position="426"/>
    </location>
</feature>
<feature type="strand" evidence="16">
    <location>
        <begin position="430"/>
        <end position="434"/>
    </location>
</feature>
<feature type="strand" evidence="16">
    <location>
        <begin position="440"/>
        <end position="447"/>
    </location>
</feature>
<feature type="helix" evidence="16">
    <location>
        <begin position="449"/>
        <end position="462"/>
    </location>
</feature>
<feature type="strand" evidence="16">
    <location>
        <begin position="468"/>
        <end position="472"/>
    </location>
</feature>
<feature type="strand" evidence="16">
    <location>
        <begin position="475"/>
        <end position="481"/>
    </location>
</feature>
<feature type="helix" evidence="16">
    <location>
        <begin position="489"/>
        <end position="507"/>
    </location>
</feature>
<feature type="sequence conflict" description="In Ref. 4; AAO16848." evidence="13" ref="4">
    <original>A</original>
    <variation>V</variation>
    <location sequence="P05031-3">
        <position position="13"/>
    </location>
</feature>
<gene>
    <name type="primary">Ddc</name>
    <name type="ORF">CG10697</name>
</gene>
<name>DDC_DROME</name>
<dbReference type="EC" id="4.1.1.28" evidence="5"/>
<dbReference type="EMBL" id="X04661">
    <property type="protein sequence ID" value="CAB37087.1"/>
    <property type="molecule type" value="Genomic_DNA"/>
</dbReference>
<dbReference type="EMBL" id="X04661">
    <property type="protein sequence ID" value="CAB37088.1"/>
    <property type="molecule type" value="Genomic_DNA"/>
</dbReference>
<dbReference type="EMBL" id="X04426">
    <property type="protein sequence ID" value="CAA28022.1"/>
    <property type="molecule type" value="Genomic_DNA"/>
</dbReference>
<dbReference type="EMBL" id="X04426">
    <property type="protein sequence ID" value="CAA28023.1"/>
    <property type="molecule type" value="Genomic_DNA"/>
</dbReference>
<dbReference type="EMBL" id="AY197756">
    <property type="protein sequence ID" value="AAO16831.1"/>
    <property type="molecule type" value="Genomic_DNA"/>
</dbReference>
<dbReference type="EMBL" id="AY197756">
    <property type="protein sequence ID" value="AAO16832.1"/>
    <property type="molecule type" value="Genomic_DNA"/>
</dbReference>
<dbReference type="EMBL" id="AY197757">
    <property type="protein sequence ID" value="AAO16833.1"/>
    <property type="molecule type" value="Genomic_DNA"/>
</dbReference>
<dbReference type="EMBL" id="AY197757">
    <property type="protein sequence ID" value="AAO16834.1"/>
    <property type="molecule type" value="Genomic_DNA"/>
</dbReference>
<dbReference type="EMBL" id="AY197758">
    <property type="protein sequence ID" value="AAO16835.1"/>
    <property type="molecule type" value="Genomic_DNA"/>
</dbReference>
<dbReference type="EMBL" id="AY197758">
    <property type="protein sequence ID" value="AAO16836.1"/>
    <property type="molecule type" value="Genomic_DNA"/>
</dbReference>
<dbReference type="EMBL" id="AY197759">
    <property type="protein sequence ID" value="AAO16837.1"/>
    <property type="molecule type" value="Genomic_DNA"/>
</dbReference>
<dbReference type="EMBL" id="AY197759">
    <property type="protein sequence ID" value="AAO16838.1"/>
    <property type="molecule type" value="Genomic_DNA"/>
</dbReference>
<dbReference type="EMBL" id="AY197760">
    <property type="protein sequence ID" value="AAO16839.1"/>
    <property type="molecule type" value="Genomic_DNA"/>
</dbReference>
<dbReference type="EMBL" id="AY197760">
    <property type="protein sequence ID" value="AAO16840.1"/>
    <property type="molecule type" value="Genomic_DNA"/>
</dbReference>
<dbReference type="EMBL" id="AY197761">
    <property type="protein sequence ID" value="AAO16841.1"/>
    <property type="molecule type" value="Genomic_DNA"/>
</dbReference>
<dbReference type="EMBL" id="AY197761">
    <property type="protein sequence ID" value="AAO16842.1"/>
    <property type="molecule type" value="Genomic_DNA"/>
</dbReference>
<dbReference type="EMBL" id="AY197762">
    <property type="protein sequence ID" value="AAO16843.1"/>
    <property type="molecule type" value="Genomic_DNA"/>
</dbReference>
<dbReference type="EMBL" id="AY197762">
    <property type="protein sequence ID" value="AAO16844.1"/>
    <property type="molecule type" value="Genomic_DNA"/>
</dbReference>
<dbReference type="EMBL" id="AY197763">
    <property type="protein sequence ID" value="AAO16845.1"/>
    <property type="molecule type" value="Genomic_DNA"/>
</dbReference>
<dbReference type="EMBL" id="AY197763">
    <property type="protein sequence ID" value="AAO16846.1"/>
    <property type="molecule type" value="Genomic_DNA"/>
</dbReference>
<dbReference type="EMBL" id="AY197764">
    <property type="protein sequence ID" value="AAO16847.1"/>
    <property type="molecule type" value="Genomic_DNA"/>
</dbReference>
<dbReference type="EMBL" id="AY197764">
    <property type="protein sequence ID" value="AAO16848.1"/>
    <property type="molecule type" value="Genomic_DNA"/>
</dbReference>
<dbReference type="EMBL" id="AY197765">
    <property type="protein sequence ID" value="AAO16849.1"/>
    <property type="molecule type" value="Genomic_DNA"/>
</dbReference>
<dbReference type="EMBL" id="AY197765">
    <property type="protein sequence ID" value="AAO16850.1"/>
    <property type="molecule type" value="Genomic_DNA"/>
</dbReference>
<dbReference type="EMBL" id="AY197766">
    <property type="protein sequence ID" value="AAO16851.1"/>
    <property type="molecule type" value="Genomic_DNA"/>
</dbReference>
<dbReference type="EMBL" id="AY197766">
    <property type="protein sequence ID" value="AAO16852.1"/>
    <property type="molecule type" value="Genomic_DNA"/>
</dbReference>
<dbReference type="EMBL" id="AY197767">
    <property type="protein sequence ID" value="AAO16853.1"/>
    <property type="molecule type" value="Genomic_DNA"/>
</dbReference>
<dbReference type="EMBL" id="AY197767">
    <property type="protein sequence ID" value="AAO16854.1"/>
    <property type="molecule type" value="Genomic_DNA"/>
</dbReference>
<dbReference type="EMBL" id="AY197768">
    <property type="protein sequence ID" value="AAO16855.1"/>
    <property type="molecule type" value="Genomic_DNA"/>
</dbReference>
<dbReference type="EMBL" id="AY197768">
    <property type="protein sequence ID" value="AAO16856.1"/>
    <property type="molecule type" value="Genomic_DNA"/>
</dbReference>
<dbReference type="EMBL" id="AY197769">
    <property type="protein sequence ID" value="AAO16857.1"/>
    <property type="molecule type" value="Genomic_DNA"/>
</dbReference>
<dbReference type="EMBL" id="AY197769">
    <property type="protein sequence ID" value="AAO16858.1"/>
    <property type="molecule type" value="Genomic_DNA"/>
</dbReference>
<dbReference type="EMBL" id="AE014134">
    <property type="protein sequence ID" value="AAF53762.1"/>
    <property type="molecule type" value="Genomic_DNA"/>
</dbReference>
<dbReference type="EMBL" id="AE014134">
    <property type="protein sequence ID" value="AAF53763.1"/>
    <property type="molecule type" value="Genomic_DNA"/>
</dbReference>
<dbReference type="EMBL" id="AE014134">
    <property type="protein sequence ID" value="AAF53764.3"/>
    <property type="molecule type" value="Genomic_DNA"/>
</dbReference>
<dbReference type="EMBL" id="AY060708">
    <property type="protein sequence ID" value="AAL28256.1"/>
    <property type="molecule type" value="mRNA"/>
</dbReference>
<dbReference type="EMBL" id="AF091328">
    <property type="protein sequence ID" value="AAC67582.1"/>
    <property type="molecule type" value="Genomic_DNA"/>
</dbReference>
<dbReference type="EMBL" id="X05991">
    <property type="protein sequence ID" value="CAA29409.2"/>
    <property type="molecule type" value="Genomic_DNA"/>
</dbReference>
<dbReference type="PIR" id="A25697">
    <property type="entry name" value="DCFFD1"/>
</dbReference>
<dbReference type="PIR" id="A25709">
    <property type="entry name" value="DCFFA"/>
</dbReference>
<dbReference type="PIR" id="B25697">
    <property type="entry name" value="DCFFD2"/>
</dbReference>
<dbReference type="RefSeq" id="NP_523600.5">
    <molecule id="P05031-2"/>
    <property type="nucleotide sequence ID" value="NM_078876.5"/>
</dbReference>
<dbReference type="RefSeq" id="NP_724163.1">
    <molecule id="P05031-1"/>
    <property type="nucleotide sequence ID" value="NM_165279.2"/>
</dbReference>
<dbReference type="RefSeq" id="NP_724164.1">
    <molecule id="P05031-2"/>
    <property type="nucleotide sequence ID" value="NM_165280.2"/>
</dbReference>
<dbReference type="PDB" id="3K40">
    <property type="method" value="X-ray"/>
    <property type="resolution" value="1.75 A"/>
    <property type="chains" value="A/B=36-510"/>
</dbReference>
<dbReference type="PDBsum" id="3K40"/>
<dbReference type="SMR" id="P05031"/>
<dbReference type="BioGRID" id="61175">
    <property type="interactions" value="4"/>
</dbReference>
<dbReference type="DIP" id="DIP-18733N"/>
<dbReference type="FunCoup" id="P05031">
    <property type="interactions" value="177"/>
</dbReference>
<dbReference type="IntAct" id="P05031">
    <property type="interactions" value="5"/>
</dbReference>
<dbReference type="STRING" id="7227.FBpp0080710"/>
<dbReference type="PaxDb" id="7227-FBpp0080710"/>
<dbReference type="DNASU" id="35190"/>
<dbReference type="EnsemblMetazoa" id="FBtr0081166">
    <molecule id="P05031-2"/>
    <property type="protein sequence ID" value="FBpp0080709"/>
    <property type="gene ID" value="FBgn0000422"/>
</dbReference>
<dbReference type="EnsemblMetazoa" id="FBtr0081167">
    <molecule id="P05031-1"/>
    <property type="protein sequence ID" value="FBpp0080710"/>
    <property type="gene ID" value="FBgn0000422"/>
</dbReference>
<dbReference type="EnsemblMetazoa" id="FBtr0290291">
    <molecule id="P05031-2"/>
    <property type="protein sequence ID" value="FBpp0288730"/>
    <property type="gene ID" value="FBgn0000422"/>
</dbReference>
<dbReference type="GeneID" id="35190"/>
<dbReference type="KEGG" id="dme:Dmel_CG10697"/>
<dbReference type="AGR" id="FB:FBgn0000422"/>
<dbReference type="CTD" id="1644"/>
<dbReference type="FlyBase" id="FBgn0000422">
    <property type="gene designation" value="Ddc"/>
</dbReference>
<dbReference type="VEuPathDB" id="VectorBase:FBgn0000422"/>
<dbReference type="eggNOG" id="KOG0628">
    <property type="taxonomic scope" value="Eukaryota"/>
</dbReference>
<dbReference type="GeneTree" id="ENSGT00940000156004"/>
<dbReference type="InParanoid" id="P05031"/>
<dbReference type="OMA" id="NPGFNWS"/>
<dbReference type="OrthoDB" id="639767at2759"/>
<dbReference type="PhylomeDB" id="P05031"/>
<dbReference type="BRENDA" id="4.1.1.28">
    <property type="organism ID" value="1994"/>
</dbReference>
<dbReference type="Reactome" id="R-DME-209905">
    <property type="pathway name" value="Catecholamine biosynthesis"/>
</dbReference>
<dbReference type="Reactome" id="R-DME-209931">
    <property type="pathway name" value="Serotonin and melatonin biosynthesis"/>
</dbReference>
<dbReference type="SignaLink" id="P05031"/>
<dbReference type="BioGRID-ORCS" id="35190">
    <property type="hits" value="0 hits in 3 CRISPR screens"/>
</dbReference>
<dbReference type="ChiTaRS" id="Ddc">
    <property type="organism name" value="fly"/>
</dbReference>
<dbReference type="EvolutionaryTrace" id="P05031"/>
<dbReference type="GenomeRNAi" id="35190"/>
<dbReference type="PRO" id="PR:P05031"/>
<dbReference type="Proteomes" id="UP000000803">
    <property type="component" value="Chromosome 2L"/>
</dbReference>
<dbReference type="Bgee" id="FBgn0000422">
    <property type="expression patterns" value="Expressed in dopaminergic PAM neuron (Drosophila) in brain and 230 other cell types or tissues"/>
</dbReference>
<dbReference type="ExpressionAtlas" id="P05031">
    <property type="expression patterns" value="baseline and differential"/>
</dbReference>
<dbReference type="GO" id="GO:0005737">
    <property type="term" value="C:cytoplasm"/>
    <property type="evidence" value="ECO:0000318"/>
    <property type="project" value="GO_Central"/>
</dbReference>
<dbReference type="GO" id="GO:0036467">
    <property type="term" value="F:5-hydroxy-L-tryptophan decarboxylase activity"/>
    <property type="evidence" value="ECO:0000314"/>
    <property type="project" value="FlyBase"/>
</dbReference>
<dbReference type="GO" id="GO:0004058">
    <property type="term" value="F:aromatic-L-amino-acid decarboxylase activity"/>
    <property type="evidence" value="ECO:0000314"/>
    <property type="project" value="FlyBase"/>
</dbReference>
<dbReference type="GO" id="GO:0036468">
    <property type="term" value="F:L-dopa decarboxylase activity"/>
    <property type="evidence" value="ECO:0000314"/>
    <property type="project" value="FlyBase"/>
</dbReference>
<dbReference type="GO" id="GO:0030170">
    <property type="term" value="F:pyridoxal phosphate binding"/>
    <property type="evidence" value="ECO:0007669"/>
    <property type="project" value="InterPro"/>
</dbReference>
<dbReference type="GO" id="GO:0048085">
    <property type="term" value="P:adult chitin-containing cuticle pigmentation"/>
    <property type="evidence" value="ECO:0000315"/>
    <property type="project" value="FlyBase"/>
</dbReference>
<dbReference type="GO" id="GO:0007615">
    <property type="term" value="P:anesthesia-resistant memory"/>
    <property type="evidence" value="ECO:0000314"/>
    <property type="project" value="FlyBase"/>
</dbReference>
<dbReference type="GO" id="GO:0006584">
    <property type="term" value="P:catecholamine metabolic process"/>
    <property type="evidence" value="ECO:0000318"/>
    <property type="project" value="GO_Central"/>
</dbReference>
<dbReference type="GO" id="GO:0006585">
    <property type="term" value="P:dopamine biosynthetic process from tyrosine"/>
    <property type="evidence" value="ECO:0000315"/>
    <property type="project" value="FlyBase"/>
</dbReference>
<dbReference type="GO" id="GO:0007616">
    <property type="term" value="P:long-term memory"/>
    <property type="evidence" value="ECO:0000316"/>
    <property type="project" value="FlyBase"/>
</dbReference>
<dbReference type="GO" id="GO:0048082">
    <property type="term" value="P:regulation of adult chitin-containing cuticle pigmentation"/>
    <property type="evidence" value="ECO:0000315"/>
    <property type="project" value="FlyBase"/>
</dbReference>
<dbReference type="GO" id="GO:0042542">
    <property type="term" value="P:response to hydrogen peroxide"/>
    <property type="evidence" value="ECO:0000314"/>
    <property type="project" value="FlyBase"/>
</dbReference>
<dbReference type="GO" id="GO:0009611">
    <property type="term" value="P:response to wounding"/>
    <property type="evidence" value="ECO:0000270"/>
    <property type="project" value="FlyBase"/>
</dbReference>
<dbReference type="GO" id="GO:0042427">
    <property type="term" value="P:serotonin biosynthetic process"/>
    <property type="evidence" value="ECO:0000318"/>
    <property type="project" value="GO_Central"/>
</dbReference>
<dbReference type="GO" id="GO:0006587">
    <property type="term" value="P:serotonin biosynthetic process from tryptophan"/>
    <property type="evidence" value="ECO:0000315"/>
    <property type="project" value="FlyBase"/>
</dbReference>
<dbReference type="GO" id="GO:0040040">
    <property type="term" value="P:thermosensory behavior"/>
    <property type="evidence" value="ECO:0000315"/>
    <property type="project" value="FlyBase"/>
</dbReference>
<dbReference type="GO" id="GO:0043052">
    <property type="term" value="P:thermotaxis"/>
    <property type="evidence" value="ECO:0000315"/>
    <property type="project" value="FlyBase"/>
</dbReference>
<dbReference type="GO" id="GO:0035220">
    <property type="term" value="P:wing disc development"/>
    <property type="evidence" value="ECO:0000315"/>
    <property type="project" value="FlyBase"/>
</dbReference>
<dbReference type="CDD" id="cd06450">
    <property type="entry name" value="DOPA_deC_like"/>
    <property type="match status" value="1"/>
</dbReference>
<dbReference type="FunFam" id="3.90.1150.10:FF:000119">
    <property type="entry name" value="Ddc, isoform C"/>
    <property type="match status" value="1"/>
</dbReference>
<dbReference type="FunFam" id="1.20.1340.10:FF:000001">
    <property type="entry name" value="Histidine decarboxylase"/>
    <property type="match status" value="1"/>
</dbReference>
<dbReference type="FunFam" id="3.40.640.10:FF:000025">
    <property type="entry name" value="Histidine decarboxylase"/>
    <property type="match status" value="1"/>
</dbReference>
<dbReference type="Gene3D" id="3.90.1150.10">
    <property type="entry name" value="Aspartate Aminotransferase, domain 1"/>
    <property type="match status" value="1"/>
</dbReference>
<dbReference type="Gene3D" id="1.20.1340.10">
    <property type="entry name" value="dopa decarboxylase, N-terminal domain"/>
    <property type="match status" value="1"/>
</dbReference>
<dbReference type="Gene3D" id="3.40.640.10">
    <property type="entry name" value="Type I PLP-dependent aspartate aminotransferase-like (Major domain)"/>
    <property type="match status" value="1"/>
</dbReference>
<dbReference type="InterPro" id="IPR010977">
    <property type="entry name" value="Aromatic_deC"/>
</dbReference>
<dbReference type="InterPro" id="IPR002129">
    <property type="entry name" value="PyrdxlP-dep_de-COase"/>
</dbReference>
<dbReference type="InterPro" id="IPR015424">
    <property type="entry name" value="PyrdxlP-dep_Trfase"/>
</dbReference>
<dbReference type="InterPro" id="IPR015421">
    <property type="entry name" value="PyrdxlP-dep_Trfase_major"/>
</dbReference>
<dbReference type="InterPro" id="IPR015422">
    <property type="entry name" value="PyrdxlP-dep_Trfase_small"/>
</dbReference>
<dbReference type="InterPro" id="IPR021115">
    <property type="entry name" value="Pyridoxal-P_BS"/>
</dbReference>
<dbReference type="PANTHER" id="PTHR11999:SF167">
    <property type="entry name" value="AROMATIC-L-AMINO-ACID DECARBOXYLASE"/>
    <property type="match status" value="1"/>
</dbReference>
<dbReference type="PANTHER" id="PTHR11999">
    <property type="entry name" value="GROUP II PYRIDOXAL-5-PHOSPHATE DECARBOXYLASE"/>
    <property type="match status" value="1"/>
</dbReference>
<dbReference type="Pfam" id="PF00282">
    <property type="entry name" value="Pyridoxal_deC"/>
    <property type="match status" value="1"/>
</dbReference>
<dbReference type="PRINTS" id="PR00800">
    <property type="entry name" value="YHDCRBOXLASE"/>
</dbReference>
<dbReference type="SUPFAM" id="SSF53383">
    <property type="entry name" value="PLP-dependent transferases"/>
    <property type="match status" value="1"/>
</dbReference>
<dbReference type="PROSITE" id="PS00392">
    <property type="entry name" value="DDC_GAD_HDC_YDC"/>
    <property type="match status" value="1"/>
</dbReference>
<comment type="function">
    <molecule>Isoform Hypoderm</molecule>
    <text evidence="3 4">Catalyzes the decarboxylation of L-3,4-dihydroxyphenylalanine (L-DOPA) to dopamine and L-5-hydroxytryptophan (5-HTP) to serotonin (PubMed:20098687). Catalyzes the formation of serotonin more efficiently than dopamine (PubMed:20098687). Displays no activity to tyrosine (PubMed:20098687). Variation in the synthesis of bioamines may be a factor contributing to natural variation in life span (PubMed:12881721).</text>
</comment>
<comment type="catalytic activity">
    <molecule>Isoform Hypoderm</molecule>
    <reaction evidence="5">
        <text>L-dopa + H(+) = dopamine + CO2</text>
        <dbReference type="Rhea" id="RHEA:12272"/>
        <dbReference type="ChEBI" id="CHEBI:15378"/>
        <dbReference type="ChEBI" id="CHEBI:16526"/>
        <dbReference type="ChEBI" id="CHEBI:57504"/>
        <dbReference type="ChEBI" id="CHEBI:59905"/>
        <dbReference type="EC" id="4.1.1.28"/>
    </reaction>
    <physiologicalReaction direction="left-to-right" evidence="5">
        <dbReference type="Rhea" id="RHEA:12273"/>
    </physiologicalReaction>
</comment>
<comment type="catalytic activity">
    <molecule>Isoform Hypoderm</molecule>
    <reaction>
        <text>5-hydroxy-L-tryptophan + H(+) = serotonin + CO2</text>
        <dbReference type="Rhea" id="RHEA:18533"/>
        <dbReference type="ChEBI" id="CHEBI:15378"/>
        <dbReference type="ChEBI" id="CHEBI:16526"/>
        <dbReference type="ChEBI" id="CHEBI:58266"/>
        <dbReference type="ChEBI" id="CHEBI:350546"/>
        <dbReference type="EC" id="4.1.1.28"/>
    </reaction>
</comment>
<comment type="cofactor">
    <molecule>Isoform Hypoderm</molecule>
    <cofactor evidence="4 14">
        <name>pyridoxal 5'-phosphate</name>
        <dbReference type="ChEBI" id="CHEBI:597326"/>
    </cofactor>
</comment>
<comment type="biophysicochemical properties">
    <molecule>Isoform Hypoderm</molecule>
    <kinetics>
        <KM evidence="5">1.26 mM for L-dopa</KM>
        <KM evidence="4">2.2 mM for L-Dopa</KM>
        <KM evidence="4">0.4 mM for 5-HTP</KM>
    </kinetics>
    <phDependence>
        <text evidence="4">Optimum pH is 7.</text>
    </phDependence>
    <temperatureDependence>
        <text evidence="4">Optimum temperature is 30-60 degrees Celsius.</text>
    </temperatureDependence>
</comment>
<comment type="subunit">
    <text evidence="4">Homodimer.</text>
</comment>
<comment type="alternative products">
    <event type="alternative splicing"/>
    <isoform>
        <id>P05031-1</id>
        <name>CNS</name>
        <name>Long</name>
        <name>Brain</name>
        <name>56.7 kDa</name>
        <name>C</name>
        <sequence type="displayed"/>
    </isoform>
    <isoform>
        <id>P05031-2</id>
        <name>Hypoderm</name>
        <name>Short</name>
        <name>B</name>
        <name>D</name>
        <sequence type="described" ref="VSP_001305"/>
    </isoform>
    <isoform>
        <id>P05031-3</id>
        <name>3</name>
        <name>Hypoderm</name>
        <name>56.2 kDa</name>
        <sequence type="described" ref="VSP_001306"/>
    </isoform>
</comment>
<comment type="tissue specificity">
    <text evidence="8 9 10">Hypoderm isoform is expressed only in hypodermal epithelium and the CNS isoform only in central nervous system. Expressed in the adult head (at protein level) (PubMed:35167135).</text>
</comment>
<comment type="developmental stage">
    <text evidence="7 8">Hypoderm isoform has high expression levels in hypoderm during late embryogenesis, late larval development, pupariation and adult eclosion. CNS isoform has constant expression level in CNS throughout the life cycle.</text>
</comment>
<comment type="induction">
    <text evidence="6">By ecdysone. In larval epidermis, expression is rapidly induced. In adult epidermis expression responds to a pulse of hormone and there is a time lag between initial exposure and appearance of DDC.</text>
</comment>
<comment type="polymorphism">
    <text evidence="3">Three common molecular polymorphisms (2 in the promoter region and Phe-12) account for 15.5% of the genetic contribution to variance in life span, the polymorphisms are maintained by balancing selection.</text>
</comment>
<comment type="disruption phenotype">
    <text evidence="10">Simultaneous knockdown of Ddc and myc restores increased dopamine levels and the induced male-male courtship observed in the single myc knockdown.</text>
</comment>
<comment type="similarity">
    <text evidence="13">Belongs to the group II decarboxylase family.</text>
</comment>
<proteinExistence type="evidence at protein level"/>